<reference key="1">
    <citation type="submission" date="2005-08" db="EMBL/GenBank/DDBJ databases">
        <authorList>
            <consortium name="NIH - Mammalian Gene Collection (MGC) project"/>
        </authorList>
    </citation>
    <scope>NUCLEOTIDE SEQUENCE [LARGE SCALE MRNA]</scope>
    <source>
        <strain>Crossbred X Angus</strain>
        <tissue>Ileum</tissue>
    </source>
</reference>
<evidence type="ECO:0000250" key="1"/>
<evidence type="ECO:0000250" key="2">
    <source>
        <dbReference type="UniProtKB" id="Q16514"/>
    </source>
</evidence>
<evidence type="ECO:0000256" key="3">
    <source>
        <dbReference type="SAM" id="MobiDB-lite"/>
    </source>
</evidence>
<evidence type="ECO:0000305" key="4"/>
<dbReference type="EMBL" id="BC102082">
    <property type="protein sequence ID" value="AAI02083.1"/>
    <property type="molecule type" value="mRNA"/>
</dbReference>
<dbReference type="RefSeq" id="NP_001029926.1">
    <molecule id="Q3T174-1"/>
    <property type="nucleotide sequence ID" value="NM_001034754.1"/>
</dbReference>
<dbReference type="RefSeq" id="XP_005203291.1">
    <property type="nucleotide sequence ID" value="XM_005203234.3"/>
</dbReference>
<dbReference type="RefSeq" id="XP_005203292.1">
    <molecule id="Q3T174-1"/>
    <property type="nucleotide sequence ID" value="XM_005203235.5"/>
</dbReference>
<dbReference type="SMR" id="Q3T174"/>
<dbReference type="FunCoup" id="Q3T174">
    <property type="interactions" value="2623"/>
</dbReference>
<dbReference type="STRING" id="9913.ENSBTAP00000068815"/>
<dbReference type="PaxDb" id="9913-ENSBTAP00000037817"/>
<dbReference type="Ensembl" id="ENSBTAT00000037998.6">
    <molecule id="Q3T174-1"/>
    <property type="protein sequence ID" value="ENSBTAP00000037817.4"/>
    <property type="gene ID" value="ENSBTAG00000026660.6"/>
</dbReference>
<dbReference type="GeneID" id="614227"/>
<dbReference type="KEGG" id="bta:614227"/>
<dbReference type="CTD" id="6883"/>
<dbReference type="VEuPathDB" id="HostDB:ENSBTAG00000026660"/>
<dbReference type="eggNOG" id="KOG1142">
    <property type="taxonomic scope" value="Eukaryota"/>
</dbReference>
<dbReference type="GeneTree" id="ENSGT00390000002144"/>
<dbReference type="HOGENOM" id="CLU_093619_3_1_1"/>
<dbReference type="InParanoid" id="Q3T174"/>
<dbReference type="OMA" id="IAPVCKT"/>
<dbReference type="OrthoDB" id="2193432at2759"/>
<dbReference type="TreeFam" id="TF323652"/>
<dbReference type="Reactome" id="R-BTA-674695">
    <property type="pathway name" value="RNA Polymerase II Pre-transcription Events"/>
</dbReference>
<dbReference type="Reactome" id="R-BTA-6804756">
    <property type="pathway name" value="Regulation of TP53 Activity through Phosphorylation"/>
</dbReference>
<dbReference type="Reactome" id="R-BTA-73776">
    <property type="pathway name" value="RNA Polymerase II Promoter Escape"/>
</dbReference>
<dbReference type="Reactome" id="R-BTA-73779">
    <property type="pathway name" value="RNA Polymerase II Transcription Pre-Initiation And Promoter Opening"/>
</dbReference>
<dbReference type="Reactome" id="R-BTA-75953">
    <property type="pathway name" value="RNA Polymerase II Transcription Initiation"/>
</dbReference>
<dbReference type="Reactome" id="R-BTA-76042">
    <property type="pathway name" value="RNA Polymerase II Transcription Initiation And Promoter Clearance"/>
</dbReference>
<dbReference type="Proteomes" id="UP000009136">
    <property type="component" value="Chromosome 2"/>
</dbReference>
<dbReference type="Bgee" id="ENSBTAG00000026660">
    <property type="expression patterns" value="Expressed in oocyte and 106 other cell types or tissues"/>
</dbReference>
<dbReference type="GO" id="GO:0000124">
    <property type="term" value="C:SAGA complex"/>
    <property type="evidence" value="ECO:0007669"/>
    <property type="project" value="InterPro"/>
</dbReference>
<dbReference type="GO" id="GO:0005669">
    <property type="term" value="C:transcription factor TFIID complex"/>
    <property type="evidence" value="ECO:0000318"/>
    <property type="project" value="GO_Central"/>
</dbReference>
<dbReference type="GO" id="GO:0003677">
    <property type="term" value="F:DNA binding"/>
    <property type="evidence" value="ECO:0000318"/>
    <property type="project" value="GO_Central"/>
</dbReference>
<dbReference type="GO" id="GO:0046982">
    <property type="term" value="F:protein heterodimerization activity"/>
    <property type="evidence" value="ECO:0007669"/>
    <property type="project" value="InterPro"/>
</dbReference>
<dbReference type="GO" id="GO:0017025">
    <property type="term" value="F:TBP-class protein binding"/>
    <property type="evidence" value="ECO:0000318"/>
    <property type="project" value="GO_Central"/>
</dbReference>
<dbReference type="GO" id="GO:0051123">
    <property type="term" value="P:RNA polymerase II preinitiation complex assembly"/>
    <property type="evidence" value="ECO:0000318"/>
    <property type="project" value="GO_Central"/>
</dbReference>
<dbReference type="CDD" id="cd07981">
    <property type="entry name" value="HFD_TAF12"/>
    <property type="match status" value="1"/>
</dbReference>
<dbReference type="FunFam" id="1.10.20.10:FF:000011">
    <property type="entry name" value="Transcription initiation factor TFIID subunit 12"/>
    <property type="match status" value="1"/>
</dbReference>
<dbReference type="Gene3D" id="1.10.20.10">
    <property type="entry name" value="Histone, subunit A"/>
    <property type="match status" value="1"/>
</dbReference>
<dbReference type="InterPro" id="IPR009072">
    <property type="entry name" value="Histone-fold"/>
</dbReference>
<dbReference type="InterPro" id="IPR037794">
    <property type="entry name" value="TAF12"/>
</dbReference>
<dbReference type="InterPro" id="IPR003228">
    <property type="entry name" value="TFIID_TAF12_dom"/>
</dbReference>
<dbReference type="PANTHER" id="PTHR12264">
    <property type="entry name" value="TRANSCRIPTION INITIATION FACTOR TFIID SUBUNIT 12"/>
    <property type="match status" value="1"/>
</dbReference>
<dbReference type="PANTHER" id="PTHR12264:SF21">
    <property type="entry name" value="TRANSCRIPTION INITIATION FACTOR TFIID SUBUNIT 12"/>
    <property type="match status" value="1"/>
</dbReference>
<dbReference type="Pfam" id="PF03847">
    <property type="entry name" value="TFIID_20kDa"/>
    <property type="match status" value="1"/>
</dbReference>
<dbReference type="SUPFAM" id="SSF47113">
    <property type="entry name" value="Histone-fold"/>
    <property type="match status" value="1"/>
</dbReference>
<name>TAF12_BOVIN</name>
<gene>
    <name type="primary">TAF12</name>
</gene>
<organism>
    <name type="scientific">Bos taurus</name>
    <name type="common">Bovine</name>
    <dbReference type="NCBI Taxonomy" id="9913"/>
    <lineage>
        <taxon>Eukaryota</taxon>
        <taxon>Metazoa</taxon>
        <taxon>Chordata</taxon>
        <taxon>Craniata</taxon>
        <taxon>Vertebrata</taxon>
        <taxon>Euteleostomi</taxon>
        <taxon>Mammalia</taxon>
        <taxon>Eutheria</taxon>
        <taxon>Laurasiatheria</taxon>
        <taxon>Artiodactyla</taxon>
        <taxon>Ruminantia</taxon>
        <taxon>Pecora</taxon>
        <taxon>Bovidae</taxon>
        <taxon>Bovinae</taxon>
        <taxon>Bos</taxon>
    </lineage>
</organism>
<protein>
    <recommendedName>
        <fullName>Transcription initiation factor TFIID subunit 12</fullName>
    </recommendedName>
    <alternativeName>
        <fullName>Transcription initiation factor TFIID 20/15 kDa subunits</fullName>
        <shortName>TAFII-20/TAFII-15</shortName>
        <shortName>TAFII20/TAFII15</shortName>
    </alternativeName>
</protein>
<keyword id="KW-0024">Alternative initiation</keyword>
<keyword id="KW-1017">Isopeptide bond</keyword>
<keyword id="KW-0539">Nucleus</keyword>
<keyword id="KW-0597">Phosphoprotein</keyword>
<keyword id="KW-1185">Reference proteome</keyword>
<keyword id="KW-0804">Transcription</keyword>
<keyword id="KW-0805">Transcription regulation</keyword>
<keyword id="KW-0832">Ubl conjugation</keyword>
<comment type="function">
    <text evidence="2">The TFIID basal transcription factor complex plays a major role in the initiation of RNA polymerase II (Pol II)-dependent transcription. TFIID recognizes and binds promoters with or without a TATA box via its subunit TBP, a TATA-box-binding protein, and promotes assembly of the pre-initiation complex (PIC). The TFIID complex consists of TBP and TBP-associated factors (TAFs), including TAF1, TAF2, TAF3, TAF4, TAF5, TAF6, TAF7, TAF8, TAF9, TAF10, TAF11, TAF12 and TAF13. Component of the TATA-binding protein-free TAF complex (TFTC), the PCAF histone acetylase complex and the STAGA transcription coactivator-HAT complex.</text>
</comment>
<comment type="subunit">
    <text evidence="2">Component of the TFIID basal transcription factor complex, composed of TATA-box-binding protein TBP, and a number of TBP-associated factors (TAFs), including TAF1, TAF2, TAF3, TAF4, TAF5, TAF6, TAF7, TAF8, TAF9, TAF10, TAF11, TAF12 and TAF13. Component of the TATA-binding protein-free TAF complex (TFTC), the PCAF histone acetylase complex and the STAGA transcription coactivator-HAT complex. Component of the PCAF complex, at least composed of TADA2L/ADA2, TADA3L/ADA3, TAF5L/PAF65-beta, SUPT3H, TAF6L, TAF9, TAF10, TAF12 and TRRAP. Component of the STAGA transcription coactivator-HAT complex, at least composed of SUPT3H, GCN5L2, TAF5L, TAF6L, STAF65-gamma/SUPT7L, TADA3L, TAD1L, TAF10, TAF12, TRRAP and TAF9. Interacts with ATF7 (via the transactivation domain); the interaction is prevented by sumoylation of ATF7.</text>
</comment>
<comment type="subcellular location">
    <subcellularLocation>
        <location evidence="1">Nucleus</location>
    </subcellularLocation>
</comment>
<comment type="alternative products">
    <event type="alternative initiation"/>
    <isoform>
        <id>Q3T174-1</id>
        <name>TAFII20</name>
        <sequence type="displayed"/>
    </isoform>
    <isoform>
        <id>Q3T174-2</id>
        <name>TAFII15</name>
        <sequence type="described" ref="VSP_021966"/>
    </isoform>
</comment>
<comment type="similarity">
    <text evidence="4">Belongs to the TAF12 family.</text>
</comment>
<sequence>MNQFGPSALINLSNFSSIKPEPASTPPQGSMANSTAVVKIPGTPGTGGRLSPENNQVLTKKKLQDLVREVDPNEQLDEDVEEMLLQIADDFIESVVTAACQLARHRKSSTLEVKDVQLHLERQWNMWIPGFGSEEIRPYKKACTTEAHKQRMALIRKTTKK</sequence>
<accession>Q3T174</accession>
<feature type="chain" id="PRO_0000268197" description="Transcription initiation factor TFIID subunit 12">
    <location>
        <begin position="1"/>
        <end position="161"/>
    </location>
</feature>
<feature type="domain" description="Histone-fold" evidence="4">
    <location>
        <begin position="56"/>
        <end position="128"/>
    </location>
</feature>
<feature type="region of interest" description="Disordered" evidence="3">
    <location>
        <begin position="15"/>
        <end position="55"/>
    </location>
</feature>
<feature type="compositionally biased region" description="Polar residues" evidence="3">
    <location>
        <begin position="26"/>
        <end position="36"/>
    </location>
</feature>
<feature type="modified residue" description="Phosphothreonine" evidence="2">
    <location>
        <position position="43"/>
    </location>
</feature>
<feature type="modified residue" description="Phosphoserine" evidence="2">
    <location>
        <position position="51"/>
    </location>
</feature>
<feature type="modified residue" description="Phosphothreonine" evidence="2">
    <location>
        <position position="59"/>
    </location>
</feature>
<feature type="cross-link" description="Glycyl lysine isopeptide (Lys-Gly) (interchain with G-Cter in SUMO2)" evidence="2">
    <location>
        <position position="19"/>
    </location>
</feature>
<feature type="splice variant" id="VSP_021966" description="In isoform TAFII15." evidence="4">
    <location>
        <begin position="1"/>
        <end position="30"/>
    </location>
</feature>
<proteinExistence type="evidence at transcript level"/>